<protein>
    <recommendedName>
        <fullName evidence="1">GTPase Der</fullName>
    </recommendedName>
    <alternativeName>
        <fullName evidence="1">GTP-binding protein EngA</fullName>
    </alternativeName>
</protein>
<feature type="chain" id="PRO_1000011570" description="GTPase Der">
    <location>
        <begin position="1"/>
        <end position="472"/>
    </location>
</feature>
<feature type="domain" description="EngA-type G 1">
    <location>
        <begin position="3"/>
        <end position="166"/>
    </location>
</feature>
<feature type="domain" description="EngA-type G 2">
    <location>
        <begin position="188"/>
        <end position="361"/>
    </location>
</feature>
<feature type="domain" description="KH-like" evidence="1">
    <location>
        <begin position="362"/>
        <end position="446"/>
    </location>
</feature>
<feature type="binding site" evidence="1">
    <location>
        <begin position="9"/>
        <end position="16"/>
    </location>
    <ligand>
        <name>GTP</name>
        <dbReference type="ChEBI" id="CHEBI:37565"/>
        <label>1</label>
    </ligand>
</feature>
<feature type="binding site" evidence="1">
    <location>
        <begin position="56"/>
        <end position="60"/>
    </location>
    <ligand>
        <name>GTP</name>
        <dbReference type="ChEBI" id="CHEBI:37565"/>
        <label>1</label>
    </ligand>
</feature>
<feature type="binding site" evidence="1">
    <location>
        <begin position="118"/>
        <end position="121"/>
    </location>
    <ligand>
        <name>GTP</name>
        <dbReference type="ChEBI" id="CHEBI:37565"/>
        <label>1</label>
    </ligand>
</feature>
<feature type="binding site" evidence="1">
    <location>
        <begin position="194"/>
        <end position="201"/>
    </location>
    <ligand>
        <name>GTP</name>
        <dbReference type="ChEBI" id="CHEBI:37565"/>
        <label>2</label>
    </ligand>
</feature>
<feature type="binding site" evidence="1">
    <location>
        <begin position="241"/>
        <end position="245"/>
    </location>
    <ligand>
        <name>GTP</name>
        <dbReference type="ChEBI" id="CHEBI:37565"/>
        <label>2</label>
    </ligand>
</feature>
<feature type="binding site" evidence="1">
    <location>
        <begin position="306"/>
        <end position="309"/>
    </location>
    <ligand>
        <name>GTP</name>
        <dbReference type="ChEBI" id="CHEBI:37565"/>
        <label>2</label>
    </ligand>
</feature>
<proteinExistence type="inferred from homology"/>
<name>DER_BAUCH</name>
<organism>
    <name type="scientific">Baumannia cicadellinicola subsp. Homalodisca coagulata</name>
    <dbReference type="NCBI Taxonomy" id="374463"/>
    <lineage>
        <taxon>Bacteria</taxon>
        <taxon>Pseudomonadati</taxon>
        <taxon>Pseudomonadota</taxon>
        <taxon>Gammaproteobacteria</taxon>
        <taxon>Candidatus Palibaumannia</taxon>
    </lineage>
</organism>
<sequence length="472" mass="53091">MIPIIALVGRPNVGKSTLFNKLTHTNDAIVADYSGLTRDRKYGHAKWKNYNFIVIDTGGIGISKKGLAIHIIKQSLLAIKEADVIFFVVDAITGLMIEDQSIAKYLRKLQKPTFIIINKIDGIDITQVKLQFYAINIGQIFPIAALQGRGINILLKAVFLSLIQNNIPLTNNSFTESTKYIDQLLMPIKLAIVGSSNVGKSTLANSFLGEERVVVFDMPGTTRDSTYIPMIRAEREYVLIDTAGLRKRSKITDIAEKLSTVKTLQSIEESNVVLLVLDAHKGISDQDLSLLSLIIDSGRAFVIVVNKWDNLSIERRNSIKDTLAYRLSFINFARIHFISALYGTNIDQIFQSVNEAYHCSTKRISTALLTKILHIAIKEHQPPIISGYRVKLKYAHYGGYNPPIVVIHGNKATELPVSYKRYLSNFFRHSLQIMGTPIRIQFNEPANPFIHHKSIPNKLRKLLLSKRNIKIK</sequence>
<dbReference type="EMBL" id="CP000238">
    <property type="protein sequence ID" value="ABF14039.1"/>
    <property type="molecule type" value="Genomic_DNA"/>
</dbReference>
<dbReference type="RefSeq" id="WP_011520223.1">
    <property type="nucleotide sequence ID" value="NC_007984.1"/>
</dbReference>
<dbReference type="SMR" id="Q1LU74"/>
<dbReference type="STRING" id="374463.BCI_0011"/>
<dbReference type="KEGG" id="bci:BCI_0011"/>
<dbReference type="HOGENOM" id="CLU_016077_5_1_6"/>
<dbReference type="OrthoDB" id="9805918at2"/>
<dbReference type="Proteomes" id="UP000002427">
    <property type="component" value="Chromosome"/>
</dbReference>
<dbReference type="GO" id="GO:0005525">
    <property type="term" value="F:GTP binding"/>
    <property type="evidence" value="ECO:0007669"/>
    <property type="project" value="UniProtKB-UniRule"/>
</dbReference>
<dbReference type="GO" id="GO:0043022">
    <property type="term" value="F:ribosome binding"/>
    <property type="evidence" value="ECO:0007669"/>
    <property type="project" value="TreeGrafter"/>
</dbReference>
<dbReference type="GO" id="GO:0042254">
    <property type="term" value="P:ribosome biogenesis"/>
    <property type="evidence" value="ECO:0007669"/>
    <property type="project" value="UniProtKB-KW"/>
</dbReference>
<dbReference type="CDD" id="cd01894">
    <property type="entry name" value="EngA1"/>
    <property type="match status" value="1"/>
</dbReference>
<dbReference type="CDD" id="cd01895">
    <property type="entry name" value="EngA2"/>
    <property type="match status" value="1"/>
</dbReference>
<dbReference type="FunFam" id="3.30.300.20:FF:000004">
    <property type="entry name" value="GTPase Der"/>
    <property type="match status" value="1"/>
</dbReference>
<dbReference type="FunFam" id="3.40.50.300:FF:000040">
    <property type="entry name" value="GTPase Der"/>
    <property type="match status" value="1"/>
</dbReference>
<dbReference type="FunFam" id="3.40.50.300:FF:000057">
    <property type="entry name" value="GTPase Der"/>
    <property type="match status" value="1"/>
</dbReference>
<dbReference type="Gene3D" id="3.30.300.20">
    <property type="match status" value="1"/>
</dbReference>
<dbReference type="Gene3D" id="3.40.50.300">
    <property type="entry name" value="P-loop containing nucleotide triphosphate hydrolases"/>
    <property type="match status" value="2"/>
</dbReference>
<dbReference type="HAMAP" id="MF_00195">
    <property type="entry name" value="GTPase_Der"/>
    <property type="match status" value="1"/>
</dbReference>
<dbReference type="InterPro" id="IPR031166">
    <property type="entry name" value="G_ENGA"/>
</dbReference>
<dbReference type="InterPro" id="IPR006073">
    <property type="entry name" value="GTP-bd"/>
</dbReference>
<dbReference type="InterPro" id="IPR016484">
    <property type="entry name" value="GTPase_Der"/>
</dbReference>
<dbReference type="InterPro" id="IPR032859">
    <property type="entry name" value="KH_dom-like"/>
</dbReference>
<dbReference type="InterPro" id="IPR015946">
    <property type="entry name" value="KH_dom-like_a/b"/>
</dbReference>
<dbReference type="InterPro" id="IPR027417">
    <property type="entry name" value="P-loop_NTPase"/>
</dbReference>
<dbReference type="InterPro" id="IPR005225">
    <property type="entry name" value="Small_GTP-bd"/>
</dbReference>
<dbReference type="NCBIfam" id="TIGR03594">
    <property type="entry name" value="GTPase_EngA"/>
    <property type="match status" value="1"/>
</dbReference>
<dbReference type="NCBIfam" id="TIGR00231">
    <property type="entry name" value="small_GTP"/>
    <property type="match status" value="2"/>
</dbReference>
<dbReference type="PANTHER" id="PTHR43834">
    <property type="entry name" value="GTPASE DER"/>
    <property type="match status" value="1"/>
</dbReference>
<dbReference type="PANTHER" id="PTHR43834:SF6">
    <property type="entry name" value="GTPASE DER"/>
    <property type="match status" value="1"/>
</dbReference>
<dbReference type="Pfam" id="PF14714">
    <property type="entry name" value="KH_dom-like"/>
    <property type="match status" value="1"/>
</dbReference>
<dbReference type="Pfam" id="PF01926">
    <property type="entry name" value="MMR_HSR1"/>
    <property type="match status" value="2"/>
</dbReference>
<dbReference type="PIRSF" id="PIRSF006485">
    <property type="entry name" value="GTP-binding_EngA"/>
    <property type="match status" value="1"/>
</dbReference>
<dbReference type="PRINTS" id="PR00326">
    <property type="entry name" value="GTP1OBG"/>
</dbReference>
<dbReference type="SUPFAM" id="SSF52540">
    <property type="entry name" value="P-loop containing nucleoside triphosphate hydrolases"/>
    <property type="match status" value="2"/>
</dbReference>
<dbReference type="PROSITE" id="PS51712">
    <property type="entry name" value="G_ENGA"/>
    <property type="match status" value="2"/>
</dbReference>
<comment type="function">
    <text evidence="1">GTPase that plays an essential role in the late steps of ribosome biogenesis.</text>
</comment>
<comment type="subunit">
    <text evidence="1">Associates with the 50S ribosomal subunit.</text>
</comment>
<comment type="similarity">
    <text evidence="1">Belongs to the TRAFAC class TrmE-Era-EngA-EngB-Septin-like GTPase superfamily. EngA (Der) GTPase family.</text>
</comment>
<evidence type="ECO:0000255" key="1">
    <source>
        <dbReference type="HAMAP-Rule" id="MF_00195"/>
    </source>
</evidence>
<accession>Q1LU74</accession>
<gene>
    <name evidence="1" type="primary">der</name>
    <name type="synonym">engA</name>
    <name type="ordered locus">BCI_0011</name>
</gene>
<keyword id="KW-0342">GTP-binding</keyword>
<keyword id="KW-0547">Nucleotide-binding</keyword>
<keyword id="KW-1185">Reference proteome</keyword>
<keyword id="KW-0677">Repeat</keyword>
<keyword id="KW-0690">Ribosome biogenesis</keyword>
<reference key="1">
    <citation type="journal article" date="2006" name="PLoS Biol.">
        <title>Metabolic complementarity and genomics of the dual bacterial symbiosis of sharpshooters.</title>
        <authorList>
            <person name="Wu D."/>
            <person name="Daugherty S.C."/>
            <person name="Van Aken S.E."/>
            <person name="Pai G.H."/>
            <person name="Watkins K.L."/>
            <person name="Khouri H."/>
            <person name="Tallon L.J."/>
            <person name="Zaborsky J.M."/>
            <person name="Dunbar H.E."/>
            <person name="Tran P.L."/>
            <person name="Moran N.A."/>
            <person name="Eisen J.A."/>
        </authorList>
    </citation>
    <scope>NUCLEOTIDE SEQUENCE [LARGE SCALE GENOMIC DNA]</scope>
</reference>